<accession>A6WJ70</accession>
<reference key="1">
    <citation type="submission" date="2007-07" db="EMBL/GenBank/DDBJ databases">
        <title>Complete sequence of chromosome of Shewanella baltica OS185.</title>
        <authorList>
            <consortium name="US DOE Joint Genome Institute"/>
            <person name="Copeland A."/>
            <person name="Lucas S."/>
            <person name="Lapidus A."/>
            <person name="Barry K."/>
            <person name="Glavina del Rio T."/>
            <person name="Dalin E."/>
            <person name="Tice H."/>
            <person name="Pitluck S."/>
            <person name="Sims D."/>
            <person name="Brettin T."/>
            <person name="Bruce D."/>
            <person name="Detter J.C."/>
            <person name="Han C."/>
            <person name="Schmutz J."/>
            <person name="Larimer F."/>
            <person name="Land M."/>
            <person name="Hauser L."/>
            <person name="Kyrpides N."/>
            <person name="Mikhailova N."/>
            <person name="Brettar I."/>
            <person name="Rodrigues J."/>
            <person name="Konstantinidis K."/>
            <person name="Tiedje J."/>
            <person name="Richardson P."/>
        </authorList>
    </citation>
    <scope>NUCLEOTIDE SEQUENCE [LARGE SCALE GENOMIC DNA]</scope>
    <source>
        <strain>OS185</strain>
    </source>
</reference>
<gene>
    <name evidence="1" type="primary">rplM</name>
    <name type="ordered locus">Shew185_0702</name>
</gene>
<dbReference type="EMBL" id="CP000753">
    <property type="protein sequence ID" value="ABS06859.1"/>
    <property type="molecule type" value="Genomic_DNA"/>
</dbReference>
<dbReference type="RefSeq" id="WP_012088240.1">
    <property type="nucleotide sequence ID" value="NC_009665.1"/>
</dbReference>
<dbReference type="SMR" id="A6WJ70"/>
<dbReference type="KEGG" id="sbm:Shew185_0702"/>
<dbReference type="HOGENOM" id="CLU_082184_2_2_6"/>
<dbReference type="GO" id="GO:0022625">
    <property type="term" value="C:cytosolic large ribosomal subunit"/>
    <property type="evidence" value="ECO:0007669"/>
    <property type="project" value="TreeGrafter"/>
</dbReference>
<dbReference type="GO" id="GO:0003729">
    <property type="term" value="F:mRNA binding"/>
    <property type="evidence" value="ECO:0007669"/>
    <property type="project" value="TreeGrafter"/>
</dbReference>
<dbReference type="GO" id="GO:0003735">
    <property type="term" value="F:structural constituent of ribosome"/>
    <property type="evidence" value="ECO:0007669"/>
    <property type="project" value="InterPro"/>
</dbReference>
<dbReference type="GO" id="GO:0017148">
    <property type="term" value="P:negative regulation of translation"/>
    <property type="evidence" value="ECO:0007669"/>
    <property type="project" value="TreeGrafter"/>
</dbReference>
<dbReference type="GO" id="GO:0006412">
    <property type="term" value="P:translation"/>
    <property type="evidence" value="ECO:0007669"/>
    <property type="project" value="UniProtKB-UniRule"/>
</dbReference>
<dbReference type="CDD" id="cd00392">
    <property type="entry name" value="Ribosomal_L13"/>
    <property type="match status" value="1"/>
</dbReference>
<dbReference type="FunFam" id="3.90.1180.10:FF:000001">
    <property type="entry name" value="50S ribosomal protein L13"/>
    <property type="match status" value="1"/>
</dbReference>
<dbReference type="Gene3D" id="3.90.1180.10">
    <property type="entry name" value="Ribosomal protein L13"/>
    <property type="match status" value="1"/>
</dbReference>
<dbReference type="HAMAP" id="MF_01366">
    <property type="entry name" value="Ribosomal_uL13"/>
    <property type="match status" value="1"/>
</dbReference>
<dbReference type="InterPro" id="IPR005822">
    <property type="entry name" value="Ribosomal_uL13"/>
</dbReference>
<dbReference type="InterPro" id="IPR005823">
    <property type="entry name" value="Ribosomal_uL13_bac-type"/>
</dbReference>
<dbReference type="InterPro" id="IPR023563">
    <property type="entry name" value="Ribosomal_uL13_CS"/>
</dbReference>
<dbReference type="InterPro" id="IPR036899">
    <property type="entry name" value="Ribosomal_uL13_sf"/>
</dbReference>
<dbReference type="NCBIfam" id="TIGR01066">
    <property type="entry name" value="rplM_bact"/>
    <property type="match status" value="1"/>
</dbReference>
<dbReference type="PANTHER" id="PTHR11545:SF2">
    <property type="entry name" value="LARGE RIBOSOMAL SUBUNIT PROTEIN UL13M"/>
    <property type="match status" value="1"/>
</dbReference>
<dbReference type="PANTHER" id="PTHR11545">
    <property type="entry name" value="RIBOSOMAL PROTEIN L13"/>
    <property type="match status" value="1"/>
</dbReference>
<dbReference type="Pfam" id="PF00572">
    <property type="entry name" value="Ribosomal_L13"/>
    <property type="match status" value="1"/>
</dbReference>
<dbReference type="PIRSF" id="PIRSF002181">
    <property type="entry name" value="Ribosomal_L13"/>
    <property type="match status" value="1"/>
</dbReference>
<dbReference type="SUPFAM" id="SSF52161">
    <property type="entry name" value="Ribosomal protein L13"/>
    <property type="match status" value="1"/>
</dbReference>
<dbReference type="PROSITE" id="PS00783">
    <property type="entry name" value="RIBOSOMAL_L13"/>
    <property type="match status" value="1"/>
</dbReference>
<name>RL13_SHEB8</name>
<comment type="function">
    <text evidence="1">This protein is one of the early assembly proteins of the 50S ribosomal subunit, although it is not seen to bind rRNA by itself. It is important during the early stages of 50S assembly.</text>
</comment>
<comment type="subunit">
    <text evidence="1">Part of the 50S ribosomal subunit.</text>
</comment>
<comment type="similarity">
    <text evidence="1">Belongs to the universal ribosomal protein uL13 family.</text>
</comment>
<keyword id="KW-0687">Ribonucleoprotein</keyword>
<keyword id="KW-0689">Ribosomal protein</keyword>
<sequence>MKTFTATPETVTRDWFVVDADGKTLGRIATEIAIRLRGKHKPEYTPHVDTGDYIIVVNAEKVTVTGNKAKGKTYYSHSGFPGGIKQISFEKLQAQKPEMIIEKAVKGMLPKGPLGRAMFRKLKVYAGAEHNHTAQQPQVLDI</sequence>
<evidence type="ECO:0000255" key="1">
    <source>
        <dbReference type="HAMAP-Rule" id="MF_01366"/>
    </source>
</evidence>
<evidence type="ECO:0000305" key="2"/>
<protein>
    <recommendedName>
        <fullName evidence="1">Large ribosomal subunit protein uL13</fullName>
    </recommendedName>
    <alternativeName>
        <fullName evidence="2">50S ribosomal protein L13</fullName>
    </alternativeName>
</protein>
<proteinExistence type="inferred from homology"/>
<organism>
    <name type="scientific">Shewanella baltica (strain OS185)</name>
    <dbReference type="NCBI Taxonomy" id="402882"/>
    <lineage>
        <taxon>Bacteria</taxon>
        <taxon>Pseudomonadati</taxon>
        <taxon>Pseudomonadota</taxon>
        <taxon>Gammaproteobacteria</taxon>
        <taxon>Alteromonadales</taxon>
        <taxon>Shewanellaceae</taxon>
        <taxon>Shewanella</taxon>
    </lineage>
</organism>
<feature type="chain" id="PRO_1000055468" description="Large ribosomal subunit protein uL13">
    <location>
        <begin position="1"/>
        <end position="142"/>
    </location>
</feature>